<name>GLNE_SALPB</name>
<organism>
    <name type="scientific">Salmonella paratyphi B (strain ATCC BAA-1250 / SPB7)</name>
    <dbReference type="NCBI Taxonomy" id="1016998"/>
    <lineage>
        <taxon>Bacteria</taxon>
        <taxon>Pseudomonadati</taxon>
        <taxon>Pseudomonadota</taxon>
        <taxon>Gammaproteobacteria</taxon>
        <taxon>Enterobacterales</taxon>
        <taxon>Enterobacteriaceae</taxon>
        <taxon>Salmonella</taxon>
    </lineage>
</organism>
<dbReference type="EC" id="2.7.7.89" evidence="1"/>
<dbReference type="EC" id="2.7.7.42" evidence="1"/>
<dbReference type="EMBL" id="CP000886">
    <property type="protein sequence ID" value="ABX69325.1"/>
    <property type="molecule type" value="Genomic_DNA"/>
</dbReference>
<dbReference type="RefSeq" id="WP_000188294.1">
    <property type="nucleotide sequence ID" value="NC_010102.1"/>
</dbReference>
<dbReference type="SMR" id="A9N5X9"/>
<dbReference type="KEGG" id="spq:SPAB_03996"/>
<dbReference type="PATRIC" id="fig|1016998.12.peg.3767"/>
<dbReference type="HOGENOM" id="CLU_006233_0_1_6"/>
<dbReference type="BioCyc" id="SENT1016998:SPAB_RS16225-MONOMER"/>
<dbReference type="Proteomes" id="UP000008556">
    <property type="component" value="Chromosome"/>
</dbReference>
<dbReference type="GO" id="GO:0005829">
    <property type="term" value="C:cytosol"/>
    <property type="evidence" value="ECO:0007669"/>
    <property type="project" value="TreeGrafter"/>
</dbReference>
<dbReference type="GO" id="GO:0008882">
    <property type="term" value="F:[glutamate-ammonia-ligase] adenylyltransferase activity"/>
    <property type="evidence" value="ECO:0007669"/>
    <property type="project" value="UniProtKB-UniRule"/>
</dbReference>
<dbReference type="GO" id="GO:0047388">
    <property type="term" value="F:[glutamine synthetase]-adenylyl-L-tyrosine phosphorylase activity"/>
    <property type="evidence" value="ECO:0007669"/>
    <property type="project" value="UniProtKB-EC"/>
</dbReference>
<dbReference type="GO" id="GO:0005524">
    <property type="term" value="F:ATP binding"/>
    <property type="evidence" value="ECO:0007669"/>
    <property type="project" value="UniProtKB-UniRule"/>
</dbReference>
<dbReference type="GO" id="GO:0000287">
    <property type="term" value="F:magnesium ion binding"/>
    <property type="evidence" value="ECO:0007669"/>
    <property type="project" value="UniProtKB-UniRule"/>
</dbReference>
<dbReference type="GO" id="GO:0000820">
    <property type="term" value="P:regulation of glutamine family amino acid metabolic process"/>
    <property type="evidence" value="ECO:0007669"/>
    <property type="project" value="UniProtKB-UniRule"/>
</dbReference>
<dbReference type="CDD" id="cd05401">
    <property type="entry name" value="NT_GlnE_GlnD_like"/>
    <property type="match status" value="2"/>
</dbReference>
<dbReference type="FunFam" id="1.10.4050.10:FF:000001">
    <property type="entry name" value="Bifunctional glutamine synthetase adenylyltransferase/adenylyl-removing enzyme"/>
    <property type="match status" value="1"/>
</dbReference>
<dbReference type="FunFam" id="1.20.120.1510:FF:000001">
    <property type="entry name" value="Bifunctional glutamine synthetase adenylyltransferase/adenylyl-removing enzyme"/>
    <property type="match status" value="1"/>
</dbReference>
<dbReference type="FunFam" id="1.20.120.330:FF:000005">
    <property type="entry name" value="Bifunctional glutamine synthetase adenylyltransferase/adenylyl-removing enzyme"/>
    <property type="match status" value="1"/>
</dbReference>
<dbReference type="FunFam" id="1.20.120.330:FF:000008">
    <property type="entry name" value="Bifunctional glutamine synthetase adenylyltransferase/adenylyl-removing enzyme"/>
    <property type="match status" value="1"/>
</dbReference>
<dbReference type="FunFam" id="3.30.460.10:FF:000009">
    <property type="entry name" value="Bifunctional glutamine synthetase adenylyltransferase/adenylyl-removing enzyme"/>
    <property type="match status" value="1"/>
</dbReference>
<dbReference type="FunFam" id="3.30.460.10:FF:000014">
    <property type="entry name" value="Bifunctional glutamine synthetase adenylyltransferase/adenylyl-removing enzyme"/>
    <property type="match status" value="1"/>
</dbReference>
<dbReference type="Gene3D" id="1.20.120.1510">
    <property type="match status" value="1"/>
</dbReference>
<dbReference type="Gene3D" id="3.30.460.10">
    <property type="entry name" value="Beta Polymerase, domain 2"/>
    <property type="match status" value="2"/>
</dbReference>
<dbReference type="Gene3D" id="1.10.4050.10">
    <property type="entry name" value="Glutamine synthase adenylyltransferase GlnE"/>
    <property type="match status" value="1"/>
</dbReference>
<dbReference type="Gene3D" id="1.20.120.330">
    <property type="entry name" value="Nucleotidyltransferases domain 2"/>
    <property type="match status" value="2"/>
</dbReference>
<dbReference type="HAMAP" id="MF_00802">
    <property type="entry name" value="GlnE"/>
    <property type="match status" value="1"/>
</dbReference>
<dbReference type="InterPro" id="IPR023057">
    <property type="entry name" value="GlnE"/>
</dbReference>
<dbReference type="InterPro" id="IPR005190">
    <property type="entry name" value="GlnE_rpt_dom"/>
</dbReference>
<dbReference type="InterPro" id="IPR043519">
    <property type="entry name" value="NT_sf"/>
</dbReference>
<dbReference type="InterPro" id="IPR013546">
    <property type="entry name" value="PII_UdlTrfase/GS_AdlTrfase"/>
</dbReference>
<dbReference type="NCBIfam" id="NF008292">
    <property type="entry name" value="PRK11072.1"/>
    <property type="match status" value="1"/>
</dbReference>
<dbReference type="PANTHER" id="PTHR30621:SF0">
    <property type="entry name" value="BIFUNCTIONAL GLUTAMINE SYNTHETASE ADENYLYLTRANSFERASE_ADENYLYL-REMOVING ENZYME"/>
    <property type="match status" value="1"/>
</dbReference>
<dbReference type="PANTHER" id="PTHR30621">
    <property type="entry name" value="GLUTAMINE SYNTHETASE ADENYLYLTRANSFERASE"/>
    <property type="match status" value="1"/>
</dbReference>
<dbReference type="Pfam" id="PF08335">
    <property type="entry name" value="GlnD_UR_UTase"/>
    <property type="match status" value="2"/>
</dbReference>
<dbReference type="Pfam" id="PF03710">
    <property type="entry name" value="GlnE"/>
    <property type="match status" value="2"/>
</dbReference>
<dbReference type="SUPFAM" id="SSF81301">
    <property type="entry name" value="Nucleotidyltransferase"/>
    <property type="match status" value="2"/>
</dbReference>
<dbReference type="SUPFAM" id="SSF81593">
    <property type="entry name" value="Nucleotidyltransferase substrate binding subunit/domain"/>
    <property type="match status" value="2"/>
</dbReference>
<reference key="1">
    <citation type="submission" date="2007-11" db="EMBL/GenBank/DDBJ databases">
        <authorList>
            <consortium name="The Salmonella enterica serovar Paratyphi B Genome Sequencing Project"/>
            <person name="McClelland M."/>
            <person name="Sanderson E.K."/>
            <person name="Porwollik S."/>
            <person name="Spieth J."/>
            <person name="Clifton W.S."/>
            <person name="Fulton R."/>
            <person name="Cordes M."/>
            <person name="Wollam A."/>
            <person name="Shah N."/>
            <person name="Pepin K."/>
            <person name="Bhonagiri V."/>
            <person name="Nash W."/>
            <person name="Johnson M."/>
            <person name="Thiruvilangam P."/>
            <person name="Wilson R."/>
        </authorList>
    </citation>
    <scope>NUCLEOTIDE SEQUENCE [LARGE SCALE GENOMIC DNA]</scope>
    <source>
        <strain>ATCC BAA-1250 / SPB7</strain>
    </source>
</reference>
<evidence type="ECO:0000255" key="1">
    <source>
        <dbReference type="HAMAP-Rule" id="MF_00802"/>
    </source>
</evidence>
<keyword id="KW-0067">ATP-binding</keyword>
<keyword id="KW-0460">Magnesium</keyword>
<keyword id="KW-0511">Multifunctional enzyme</keyword>
<keyword id="KW-0547">Nucleotide-binding</keyword>
<keyword id="KW-0548">Nucleotidyltransferase</keyword>
<keyword id="KW-0808">Transferase</keyword>
<gene>
    <name evidence="1" type="primary">glnE</name>
    <name type="ordered locus">SPAB_03996</name>
</gene>
<accession>A9N5X9</accession>
<feature type="chain" id="PRO_1000083702" description="Bifunctional glutamine synthetase adenylyltransferase/adenylyl-removing enzyme">
    <location>
        <begin position="1"/>
        <end position="947"/>
    </location>
</feature>
<feature type="region of interest" description="Adenylyl removase" evidence="1">
    <location>
        <begin position="1"/>
        <end position="440"/>
    </location>
</feature>
<feature type="region of interest" description="Adenylyl transferase" evidence="1">
    <location>
        <begin position="450"/>
        <end position="947"/>
    </location>
</feature>
<sequence length="947" mass="108025">MTPLSSPLSQYWQTVVERLPEGFTETSLSAQAKSVLTFSDFALDSVIAHPEWLAELESASPQADEWRHYAGWLQEALAGVCDDASLMRELRFFRRRIMVRIAWAQTLSLVDDETILQQLSHLAETLIVGARDWLYAACCREWGTPCNPQGVPQPLLILGMGKLGGGELNFSSDIDLIFAWPEHGETRGGRRELDNAQFFTRLGQRLIKALDQPTMDGFVYRVDMRLRPFGDSGPLVLSFAALEDYYQEQGRDWERYAMVKARLMGDNDDAWSRELRAMLRPFVFRRYIDFSVIQSLRNMKGMIAREVRRRGLKDNIKLGAGGIREIEFIVQVFQLIRGGREPSLQSRSLLPTLDAIAALHLLPENDVAQLRVAYLFLRRLENLLQSINDEQTQTLPADDLNRARLAWGMKAENWPQLVGELTDHMANVRRVFNELIGDDEADTPQEEERSEPWREVWQDALQEDDSTPVLAHLADEDRRQVLTLIADFRKELDKRPIGPRGRQVLDQLMPHLLADVCSREDAAVTLSRITPLLAGIVTRTTYLELLSEFPGALKHLIMLCAASPMIASQLARYPLLLDELLDPGTLYQPTATDAYRDELRQYLLRVPEEDEEQQLEALRQFKQAQLLRIAAADIAGTLPVMKVSDHLTWLAEAMIDAVVQQAWTQMVARYGQPAHLDERQGRGFAVVGYGKLGGWELGYSSDLDLIFLHDCPMDVMTNGEREIDGRQFYLRLAQRIMHLFSTRTSSGILYEVDARLRPSGAAGMLVTSADAFADYQQHEAWTWEHQALVRARVVYGDPQLTSQFDTVRRTIMTTARDGKTLQTEVREMREKMRAHLGNKHRDRFDIKADEGGITDIEFIAQYLVLRYAHEKPKLTRWSDNVRILELLAQNGIMDEHEAQALTVAYTTLRDELHHLALQELPGHVAQTCFSKERALVQASWRKWLVAV</sequence>
<comment type="function">
    <text evidence="1">Involved in the regulation of glutamine synthetase GlnA, a key enzyme in the process to assimilate ammonia. When cellular nitrogen levels are high, the C-terminal adenylyl transferase (AT) inactivates GlnA by covalent transfer of an adenylyl group from ATP to specific tyrosine residue of GlnA, thus reducing its activity. Conversely, when nitrogen levels are low, the N-terminal adenylyl removase (AR) activates GlnA by removing the adenylyl group by phosphorolysis, increasing its activity. The regulatory region of GlnE binds the signal transduction protein PII (GlnB) which indicates the nitrogen status of the cell.</text>
</comment>
<comment type="catalytic activity">
    <reaction evidence="1">
        <text>[glutamine synthetase]-O(4)-(5'-adenylyl)-L-tyrosine + phosphate = [glutamine synthetase]-L-tyrosine + ADP</text>
        <dbReference type="Rhea" id="RHEA:43716"/>
        <dbReference type="Rhea" id="RHEA-COMP:10660"/>
        <dbReference type="Rhea" id="RHEA-COMP:10661"/>
        <dbReference type="ChEBI" id="CHEBI:43474"/>
        <dbReference type="ChEBI" id="CHEBI:46858"/>
        <dbReference type="ChEBI" id="CHEBI:83624"/>
        <dbReference type="ChEBI" id="CHEBI:456216"/>
        <dbReference type="EC" id="2.7.7.89"/>
    </reaction>
</comment>
<comment type="catalytic activity">
    <reaction evidence="1">
        <text>[glutamine synthetase]-L-tyrosine + ATP = [glutamine synthetase]-O(4)-(5'-adenylyl)-L-tyrosine + diphosphate</text>
        <dbReference type="Rhea" id="RHEA:18589"/>
        <dbReference type="Rhea" id="RHEA-COMP:10660"/>
        <dbReference type="Rhea" id="RHEA-COMP:10661"/>
        <dbReference type="ChEBI" id="CHEBI:30616"/>
        <dbReference type="ChEBI" id="CHEBI:33019"/>
        <dbReference type="ChEBI" id="CHEBI:46858"/>
        <dbReference type="ChEBI" id="CHEBI:83624"/>
        <dbReference type="EC" id="2.7.7.42"/>
    </reaction>
</comment>
<comment type="cofactor">
    <cofactor evidence="1">
        <name>Mg(2+)</name>
        <dbReference type="ChEBI" id="CHEBI:18420"/>
    </cofactor>
</comment>
<comment type="similarity">
    <text evidence="1">Belongs to the GlnE family.</text>
</comment>
<proteinExistence type="inferred from homology"/>
<protein>
    <recommendedName>
        <fullName evidence="1">Bifunctional glutamine synthetase adenylyltransferase/adenylyl-removing enzyme</fullName>
    </recommendedName>
    <alternativeName>
        <fullName evidence="1">ATP:glutamine synthetase adenylyltransferase</fullName>
    </alternativeName>
    <alternativeName>
        <fullName evidence="1">ATase</fullName>
    </alternativeName>
    <domain>
        <recommendedName>
            <fullName evidence="1">Glutamine synthetase adenylyl-L-tyrosine phosphorylase</fullName>
            <ecNumber evidence="1">2.7.7.89</ecNumber>
        </recommendedName>
        <alternativeName>
            <fullName evidence="1">Adenylyl removase</fullName>
            <shortName evidence="1">AR</shortName>
            <shortName evidence="1">AT-N</shortName>
        </alternativeName>
    </domain>
    <domain>
        <recommendedName>
            <fullName evidence="1">Glutamine synthetase adenylyl transferase</fullName>
            <ecNumber evidence="1">2.7.7.42</ecNumber>
        </recommendedName>
        <alternativeName>
            <fullName evidence="1">Adenylyl transferase</fullName>
            <shortName evidence="1">AT</shortName>
            <shortName evidence="1">AT-C</shortName>
        </alternativeName>
    </domain>
</protein>